<feature type="chain" id="PRO_1000165739" description="Large ribosomal subunit protein uL2">
    <location>
        <begin position="1"/>
        <end position="275"/>
    </location>
</feature>
<feature type="region of interest" description="Disordered" evidence="2">
    <location>
        <begin position="208"/>
        <end position="275"/>
    </location>
</feature>
<feature type="compositionally biased region" description="Basic residues" evidence="2">
    <location>
        <begin position="209"/>
        <end position="219"/>
    </location>
</feature>
<feature type="compositionally biased region" description="Basic residues" evidence="2">
    <location>
        <begin position="254"/>
        <end position="263"/>
    </location>
</feature>
<evidence type="ECO:0000255" key="1">
    <source>
        <dbReference type="HAMAP-Rule" id="MF_01320"/>
    </source>
</evidence>
<evidence type="ECO:0000256" key="2">
    <source>
        <dbReference type="SAM" id="MobiDB-lite"/>
    </source>
</evidence>
<evidence type="ECO:0000305" key="3"/>
<sequence>MALVKTKPTSPGRRFVVKVVHPELHKGDPYAPLVESKNRINSRNNQGRITVRRRGGGHKRNYRIIDFKRDKEGIEGKVERLEYDPNRSAHIALVLYPDGERRYIIAPKGVHKGSKVVSGREAPIRPGNCLPLQNIPLGATIHNIELKPGKGAQLVRSAGASAQLAAKEGIYAIIRMRSGETRKILAVCRACIGEVSNSEHNLRSLGKAGAKRWRGRRPTVRGVAMNPVDHPHGGGEGKTSGGRHPVSPTGKPTKGYKTRRNKRTSNMIIRDRRKK</sequence>
<dbReference type="EMBL" id="CP000733">
    <property type="protein sequence ID" value="ABS77399.1"/>
    <property type="molecule type" value="Genomic_DNA"/>
</dbReference>
<dbReference type="RefSeq" id="WP_010957456.1">
    <property type="nucleotide sequence ID" value="NC_009727.1"/>
</dbReference>
<dbReference type="SMR" id="A9KD28"/>
<dbReference type="KEGG" id="cbd:CBUD_1851"/>
<dbReference type="HOGENOM" id="CLU_036235_2_1_6"/>
<dbReference type="Proteomes" id="UP000008555">
    <property type="component" value="Chromosome"/>
</dbReference>
<dbReference type="GO" id="GO:0015934">
    <property type="term" value="C:large ribosomal subunit"/>
    <property type="evidence" value="ECO:0007669"/>
    <property type="project" value="InterPro"/>
</dbReference>
<dbReference type="GO" id="GO:0019843">
    <property type="term" value="F:rRNA binding"/>
    <property type="evidence" value="ECO:0007669"/>
    <property type="project" value="UniProtKB-UniRule"/>
</dbReference>
<dbReference type="GO" id="GO:0003735">
    <property type="term" value="F:structural constituent of ribosome"/>
    <property type="evidence" value="ECO:0007669"/>
    <property type="project" value="InterPro"/>
</dbReference>
<dbReference type="GO" id="GO:0016740">
    <property type="term" value="F:transferase activity"/>
    <property type="evidence" value="ECO:0007669"/>
    <property type="project" value="InterPro"/>
</dbReference>
<dbReference type="GO" id="GO:0002181">
    <property type="term" value="P:cytoplasmic translation"/>
    <property type="evidence" value="ECO:0007669"/>
    <property type="project" value="TreeGrafter"/>
</dbReference>
<dbReference type="FunFam" id="2.30.30.30:FF:000001">
    <property type="entry name" value="50S ribosomal protein L2"/>
    <property type="match status" value="1"/>
</dbReference>
<dbReference type="FunFam" id="2.40.50.140:FF:000003">
    <property type="entry name" value="50S ribosomal protein L2"/>
    <property type="match status" value="1"/>
</dbReference>
<dbReference type="FunFam" id="4.10.950.10:FF:000001">
    <property type="entry name" value="50S ribosomal protein L2"/>
    <property type="match status" value="1"/>
</dbReference>
<dbReference type="Gene3D" id="2.30.30.30">
    <property type="match status" value="1"/>
</dbReference>
<dbReference type="Gene3D" id="2.40.50.140">
    <property type="entry name" value="Nucleic acid-binding proteins"/>
    <property type="match status" value="1"/>
</dbReference>
<dbReference type="Gene3D" id="4.10.950.10">
    <property type="entry name" value="Ribosomal protein L2, domain 3"/>
    <property type="match status" value="1"/>
</dbReference>
<dbReference type="HAMAP" id="MF_01320_B">
    <property type="entry name" value="Ribosomal_uL2_B"/>
    <property type="match status" value="1"/>
</dbReference>
<dbReference type="InterPro" id="IPR012340">
    <property type="entry name" value="NA-bd_OB-fold"/>
</dbReference>
<dbReference type="InterPro" id="IPR014722">
    <property type="entry name" value="Rib_uL2_dom2"/>
</dbReference>
<dbReference type="InterPro" id="IPR002171">
    <property type="entry name" value="Ribosomal_uL2"/>
</dbReference>
<dbReference type="InterPro" id="IPR005880">
    <property type="entry name" value="Ribosomal_uL2_bac/org-type"/>
</dbReference>
<dbReference type="InterPro" id="IPR022669">
    <property type="entry name" value="Ribosomal_uL2_C"/>
</dbReference>
<dbReference type="InterPro" id="IPR022671">
    <property type="entry name" value="Ribosomal_uL2_CS"/>
</dbReference>
<dbReference type="InterPro" id="IPR014726">
    <property type="entry name" value="Ribosomal_uL2_dom3"/>
</dbReference>
<dbReference type="InterPro" id="IPR022666">
    <property type="entry name" value="Ribosomal_uL2_RNA-bd_dom"/>
</dbReference>
<dbReference type="InterPro" id="IPR008991">
    <property type="entry name" value="Translation_prot_SH3-like_sf"/>
</dbReference>
<dbReference type="NCBIfam" id="TIGR01171">
    <property type="entry name" value="rplB_bact"/>
    <property type="match status" value="1"/>
</dbReference>
<dbReference type="PANTHER" id="PTHR13691:SF5">
    <property type="entry name" value="LARGE RIBOSOMAL SUBUNIT PROTEIN UL2M"/>
    <property type="match status" value="1"/>
</dbReference>
<dbReference type="PANTHER" id="PTHR13691">
    <property type="entry name" value="RIBOSOMAL PROTEIN L2"/>
    <property type="match status" value="1"/>
</dbReference>
<dbReference type="Pfam" id="PF00181">
    <property type="entry name" value="Ribosomal_L2"/>
    <property type="match status" value="1"/>
</dbReference>
<dbReference type="Pfam" id="PF03947">
    <property type="entry name" value="Ribosomal_L2_C"/>
    <property type="match status" value="1"/>
</dbReference>
<dbReference type="PIRSF" id="PIRSF002158">
    <property type="entry name" value="Ribosomal_L2"/>
    <property type="match status" value="1"/>
</dbReference>
<dbReference type="SMART" id="SM01383">
    <property type="entry name" value="Ribosomal_L2"/>
    <property type="match status" value="1"/>
</dbReference>
<dbReference type="SMART" id="SM01382">
    <property type="entry name" value="Ribosomal_L2_C"/>
    <property type="match status" value="1"/>
</dbReference>
<dbReference type="SUPFAM" id="SSF50249">
    <property type="entry name" value="Nucleic acid-binding proteins"/>
    <property type="match status" value="1"/>
</dbReference>
<dbReference type="SUPFAM" id="SSF50104">
    <property type="entry name" value="Translation proteins SH3-like domain"/>
    <property type="match status" value="1"/>
</dbReference>
<dbReference type="PROSITE" id="PS00467">
    <property type="entry name" value="RIBOSOMAL_L2"/>
    <property type="match status" value="1"/>
</dbReference>
<gene>
    <name evidence="1" type="primary">rplB</name>
    <name type="ordered locus">CBUD_1851</name>
</gene>
<reference key="1">
    <citation type="journal article" date="2009" name="Infect. Immun.">
        <title>Comparative genomics reveal extensive transposon-mediated genomic plasticity and diversity among potential effector proteins within the genus Coxiella.</title>
        <authorList>
            <person name="Beare P.A."/>
            <person name="Unsworth N."/>
            <person name="Andoh M."/>
            <person name="Voth D.E."/>
            <person name="Omsland A."/>
            <person name="Gilk S.D."/>
            <person name="Williams K.P."/>
            <person name="Sobral B.W."/>
            <person name="Kupko J.J. III"/>
            <person name="Porcella S.F."/>
            <person name="Samuel J.E."/>
            <person name="Heinzen R.A."/>
        </authorList>
    </citation>
    <scope>NUCLEOTIDE SEQUENCE [LARGE SCALE GENOMIC DNA]</scope>
    <source>
        <strain>Dugway 5J108-111</strain>
    </source>
</reference>
<keyword id="KW-0687">Ribonucleoprotein</keyword>
<keyword id="KW-0689">Ribosomal protein</keyword>
<keyword id="KW-0694">RNA-binding</keyword>
<keyword id="KW-0699">rRNA-binding</keyword>
<name>RL2_COXBN</name>
<organism>
    <name type="scientific">Coxiella burnetii (strain Dugway 5J108-111)</name>
    <dbReference type="NCBI Taxonomy" id="434922"/>
    <lineage>
        <taxon>Bacteria</taxon>
        <taxon>Pseudomonadati</taxon>
        <taxon>Pseudomonadota</taxon>
        <taxon>Gammaproteobacteria</taxon>
        <taxon>Legionellales</taxon>
        <taxon>Coxiellaceae</taxon>
        <taxon>Coxiella</taxon>
    </lineage>
</organism>
<proteinExistence type="inferred from homology"/>
<accession>A9KD28</accession>
<comment type="function">
    <text evidence="1">One of the primary rRNA binding proteins. Required for association of the 30S and 50S subunits to form the 70S ribosome, for tRNA binding and peptide bond formation. It has been suggested to have peptidyltransferase activity; this is somewhat controversial. Makes several contacts with the 16S rRNA in the 70S ribosome.</text>
</comment>
<comment type="subunit">
    <text evidence="1">Part of the 50S ribosomal subunit. Forms a bridge to the 30S subunit in the 70S ribosome.</text>
</comment>
<comment type="similarity">
    <text evidence="1">Belongs to the universal ribosomal protein uL2 family.</text>
</comment>
<protein>
    <recommendedName>
        <fullName evidence="1">Large ribosomal subunit protein uL2</fullName>
    </recommendedName>
    <alternativeName>
        <fullName evidence="3">50S ribosomal protein L2</fullName>
    </alternativeName>
</protein>